<name>LUTB_GEOTN</name>
<gene>
    <name evidence="1" type="primary">lutB</name>
    <name type="ordered locus">GTNG_0367</name>
</gene>
<comment type="function">
    <text evidence="1">Is involved in L-lactate degradation and allows cells to grow with lactate as the sole carbon source. Has probably a role as an electron transporter during oxidation of L-lactate.</text>
</comment>
<comment type="similarity">
    <text evidence="1">Belongs to the LutB/YkgF family.</text>
</comment>
<accession>A4IK95</accession>
<reference key="1">
    <citation type="journal article" date="2007" name="Proc. Natl. Acad. Sci. U.S.A.">
        <title>Genome and proteome of long-chain alkane degrading Geobacillus thermodenitrificans NG80-2 isolated from a deep-subsurface oil reservoir.</title>
        <authorList>
            <person name="Feng L."/>
            <person name="Wang W."/>
            <person name="Cheng J."/>
            <person name="Ren Y."/>
            <person name="Zhao G."/>
            <person name="Gao C."/>
            <person name="Tang Y."/>
            <person name="Liu X."/>
            <person name="Han W."/>
            <person name="Peng X."/>
            <person name="Liu R."/>
            <person name="Wang L."/>
        </authorList>
    </citation>
    <scope>NUCLEOTIDE SEQUENCE [LARGE SCALE GENOMIC DNA]</scope>
    <source>
        <strain>NG80-2</strain>
    </source>
</reference>
<keyword id="KW-0004">4Fe-4S</keyword>
<keyword id="KW-0249">Electron transport</keyword>
<keyword id="KW-0408">Iron</keyword>
<keyword id="KW-0411">Iron-sulfur</keyword>
<keyword id="KW-0479">Metal-binding</keyword>
<keyword id="KW-0677">Repeat</keyword>
<keyword id="KW-0813">Transport</keyword>
<feature type="chain" id="PRO_0000383983" description="Lactate utilization protein B">
    <location>
        <begin position="1"/>
        <end position="476"/>
    </location>
</feature>
<feature type="domain" description="4Fe-4S ferredoxin-type 1" evidence="1">
    <location>
        <begin position="304"/>
        <end position="334"/>
    </location>
</feature>
<feature type="domain" description="4Fe-4S ferredoxin-type 2" evidence="1">
    <location>
        <begin position="353"/>
        <end position="382"/>
    </location>
</feature>
<feature type="binding site" evidence="1">
    <location>
        <position position="313"/>
    </location>
    <ligand>
        <name>[4Fe-4S] cluster</name>
        <dbReference type="ChEBI" id="CHEBI:49883"/>
        <label>1</label>
    </ligand>
</feature>
<feature type="binding site" evidence="1">
    <location>
        <position position="316"/>
    </location>
    <ligand>
        <name>[4Fe-4S] cluster</name>
        <dbReference type="ChEBI" id="CHEBI:49883"/>
        <label>1</label>
    </ligand>
</feature>
<feature type="binding site" evidence="1">
    <location>
        <position position="319"/>
    </location>
    <ligand>
        <name>[4Fe-4S] cluster</name>
        <dbReference type="ChEBI" id="CHEBI:49883"/>
        <label>1</label>
    </ligand>
</feature>
<feature type="binding site" evidence="1">
    <location>
        <position position="323"/>
    </location>
    <ligand>
        <name>[4Fe-4S] cluster</name>
        <dbReference type="ChEBI" id="CHEBI:49883"/>
        <label>2</label>
    </ligand>
</feature>
<feature type="binding site" evidence="1">
    <location>
        <position position="366"/>
    </location>
    <ligand>
        <name>[4Fe-4S] cluster</name>
        <dbReference type="ChEBI" id="CHEBI:49883"/>
        <label>2</label>
    </ligand>
</feature>
<feature type="binding site" evidence="1">
    <location>
        <position position="369"/>
    </location>
    <ligand>
        <name>[4Fe-4S] cluster</name>
        <dbReference type="ChEBI" id="CHEBI:49883"/>
        <label>2</label>
    </ligand>
</feature>
<feature type="binding site" evidence="1">
    <location>
        <position position="373"/>
    </location>
    <ligand>
        <name>[4Fe-4S] cluster</name>
        <dbReference type="ChEBI" id="CHEBI:49883"/>
        <label>1</label>
    </ligand>
</feature>
<protein>
    <recommendedName>
        <fullName evidence="1">Lactate utilization protein B</fullName>
    </recommendedName>
</protein>
<proteinExistence type="inferred from homology"/>
<evidence type="ECO:0000255" key="1">
    <source>
        <dbReference type="HAMAP-Rule" id="MF_02103"/>
    </source>
</evidence>
<organism>
    <name type="scientific">Geobacillus thermodenitrificans (strain NG80-2)</name>
    <dbReference type="NCBI Taxonomy" id="420246"/>
    <lineage>
        <taxon>Bacteria</taxon>
        <taxon>Bacillati</taxon>
        <taxon>Bacillota</taxon>
        <taxon>Bacilli</taxon>
        <taxon>Bacillales</taxon>
        <taxon>Anoxybacillaceae</taxon>
        <taxon>Geobacillus</taxon>
    </lineage>
</organism>
<dbReference type="EMBL" id="CP000557">
    <property type="protein sequence ID" value="ABO65749.1"/>
    <property type="molecule type" value="Genomic_DNA"/>
</dbReference>
<dbReference type="RefSeq" id="WP_008881225.1">
    <property type="nucleotide sequence ID" value="NC_009328.1"/>
</dbReference>
<dbReference type="GeneID" id="87622025"/>
<dbReference type="KEGG" id="gtn:GTNG_0367"/>
<dbReference type="eggNOG" id="COG1139">
    <property type="taxonomic scope" value="Bacteria"/>
</dbReference>
<dbReference type="HOGENOM" id="CLU_027059_2_0_9"/>
<dbReference type="Proteomes" id="UP000001578">
    <property type="component" value="Chromosome"/>
</dbReference>
<dbReference type="GO" id="GO:0051539">
    <property type="term" value="F:4 iron, 4 sulfur cluster binding"/>
    <property type="evidence" value="ECO:0007669"/>
    <property type="project" value="UniProtKB-KW"/>
</dbReference>
<dbReference type="GO" id="GO:0046872">
    <property type="term" value="F:metal ion binding"/>
    <property type="evidence" value="ECO:0007669"/>
    <property type="project" value="UniProtKB-KW"/>
</dbReference>
<dbReference type="GO" id="GO:0006089">
    <property type="term" value="P:lactate metabolic process"/>
    <property type="evidence" value="ECO:0007669"/>
    <property type="project" value="UniProtKB-UniRule"/>
</dbReference>
<dbReference type="Gene3D" id="1.10.1060.10">
    <property type="entry name" value="Alpha-helical ferredoxin"/>
    <property type="match status" value="1"/>
</dbReference>
<dbReference type="Gene3D" id="3.40.50.10420">
    <property type="entry name" value="NagB/RpiA/CoA transferase-like"/>
    <property type="match status" value="1"/>
</dbReference>
<dbReference type="HAMAP" id="MF_02103">
    <property type="entry name" value="LutB"/>
    <property type="match status" value="1"/>
</dbReference>
<dbReference type="InterPro" id="IPR017896">
    <property type="entry name" value="4Fe4S_Fe-S-bd"/>
</dbReference>
<dbReference type="InterPro" id="IPR017900">
    <property type="entry name" value="4Fe4S_Fe_S_CS"/>
</dbReference>
<dbReference type="InterPro" id="IPR024185">
    <property type="entry name" value="FTHF_cligase-like_sf"/>
</dbReference>
<dbReference type="InterPro" id="IPR009051">
    <property type="entry name" value="Helical_ferredxn"/>
</dbReference>
<dbReference type="InterPro" id="IPR003741">
    <property type="entry name" value="LUD_dom"/>
</dbReference>
<dbReference type="InterPro" id="IPR022825">
    <property type="entry name" value="LutB"/>
</dbReference>
<dbReference type="InterPro" id="IPR004452">
    <property type="entry name" value="LutB/LldF"/>
</dbReference>
<dbReference type="InterPro" id="IPR024569">
    <property type="entry name" value="LutB_C"/>
</dbReference>
<dbReference type="InterPro" id="IPR037171">
    <property type="entry name" value="NagB/RpiA_transferase-like"/>
</dbReference>
<dbReference type="NCBIfam" id="TIGR00273">
    <property type="entry name" value="LutB/LldF family L-lactate oxidation iron-sulfur protein"/>
    <property type="match status" value="1"/>
</dbReference>
<dbReference type="PANTHER" id="PTHR47153">
    <property type="entry name" value="LACTATE UTILIZATION PROTEIN B"/>
    <property type="match status" value="1"/>
</dbReference>
<dbReference type="PANTHER" id="PTHR47153:SF2">
    <property type="entry name" value="LACTATE UTILIZATION PROTEIN B"/>
    <property type="match status" value="1"/>
</dbReference>
<dbReference type="Pfam" id="PF13183">
    <property type="entry name" value="Fer4_8"/>
    <property type="match status" value="1"/>
</dbReference>
<dbReference type="Pfam" id="PF02589">
    <property type="entry name" value="LUD_dom"/>
    <property type="match status" value="1"/>
</dbReference>
<dbReference type="Pfam" id="PF11870">
    <property type="entry name" value="LutB_C"/>
    <property type="match status" value="1"/>
</dbReference>
<dbReference type="SUPFAM" id="SSF46548">
    <property type="entry name" value="alpha-helical ferredoxin"/>
    <property type="match status" value="1"/>
</dbReference>
<dbReference type="SUPFAM" id="SSF100950">
    <property type="entry name" value="NagB/RpiA/CoA transferase-like"/>
    <property type="match status" value="1"/>
</dbReference>
<dbReference type="PROSITE" id="PS00198">
    <property type="entry name" value="4FE4S_FER_1"/>
    <property type="match status" value="1"/>
</dbReference>
<dbReference type="PROSITE" id="PS51379">
    <property type="entry name" value="4FE4S_FER_2"/>
    <property type="match status" value="1"/>
</dbReference>
<sequence>MPMKIENGPFWKRVEENLQNDFMRGAVAGMQDRGYVRRLGVIEELGHWEEWRSLAEQIRKHTLENLDYYLMQLSENVAKRGGHVFFAQTAEEANDYIRRIALEKQAKKIVKSKSMVTEEINLNPVLEAIGCDVVETDLGEYILQIDDHDPPSHIVGPALHKNKEQIRDVFHRKLGYNKSSDPVELARHARETLRRDYLTADIGITGCNFAIAESGSITLVTNEGNADLVTSLPKTQITVMGMERIVPTFKEMEVLVSMLTRSAVGQKLTSYITVLTGPREQGDADGPEEFHLVIVDNGRSSILGTEFQPVLQCIRCAACVNVCPVYRHIGGHSYGSIYSGPIGAVLSPLLGGYDDYKELPYASSLCAACTEVCPVKIPLHELLIKHRQIIVEREGKAPVAEKLAMKAFRLGTASPSLYRFGTKLAPSAFAPFAEDGRITKGPGPLKAWTESRVFPAPNNERFRDWFRNRQKGGNPS</sequence>